<gene>
    <name evidence="1" type="primary">gmk</name>
    <name type="ordered locus">lin1941</name>
</gene>
<comment type="function">
    <text evidence="1">Essential for recycling GMP and indirectly, cGMP.</text>
</comment>
<comment type="catalytic activity">
    <reaction evidence="1">
        <text>GMP + ATP = GDP + ADP</text>
        <dbReference type="Rhea" id="RHEA:20780"/>
        <dbReference type="ChEBI" id="CHEBI:30616"/>
        <dbReference type="ChEBI" id="CHEBI:58115"/>
        <dbReference type="ChEBI" id="CHEBI:58189"/>
        <dbReference type="ChEBI" id="CHEBI:456216"/>
        <dbReference type="EC" id="2.7.4.8"/>
    </reaction>
</comment>
<comment type="subcellular location">
    <subcellularLocation>
        <location evidence="1">Cytoplasm</location>
    </subcellularLocation>
</comment>
<comment type="similarity">
    <text evidence="1">Belongs to the guanylate kinase family.</text>
</comment>
<dbReference type="EC" id="2.7.4.8" evidence="1"/>
<dbReference type="EMBL" id="AL596170">
    <property type="protein sequence ID" value="CAC97171.1"/>
    <property type="molecule type" value="Genomic_DNA"/>
</dbReference>
<dbReference type="PIR" id="AC1675">
    <property type="entry name" value="AC1675"/>
</dbReference>
<dbReference type="RefSeq" id="WP_010991026.1">
    <property type="nucleotide sequence ID" value="NC_003212.1"/>
</dbReference>
<dbReference type="SMR" id="Q92AI1"/>
<dbReference type="STRING" id="272626.gene:17566299"/>
<dbReference type="GeneID" id="93235279"/>
<dbReference type="KEGG" id="lin:lin1941"/>
<dbReference type="eggNOG" id="COG0194">
    <property type="taxonomic scope" value="Bacteria"/>
</dbReference>
<dbReference type="HOGENOM" id="CLU_001715_1_2_9"/>
<dbReference type="OrthoDB" id="9808150at2"/>
<dbReference type="Proteomes" id="UP000002513">
    <property type="component" value="Chromosome"/>
</dbReference>
<dbReference type="GO" id="GO:0005829">
    <property type="term" value="C:cytosol"/>
    <property type="evidence" value="ECO:0007669"/>
    <property type="project" value="TreeGrafter"/>
</dbReference>
<dbReference type="GO" id="GO:0005524">
    <property type="term" value="F:ATP binding"/>
    <property type="evidence" value="ECO:0007669"/>
    <property type="project" value="UniProtKB-UniRule"/>
</dbReference>
<dbReference type="GO" id="GO:0004385">
    <property type="term" value="F:guanylate kinase activity"/>
    <property type="evidence" value="ECO:0007669"/>
    <property type="project" value="UniProtKB-UniRule"/>
</dbReference>
<dbReference type="CDD" id="cd00071">
    <property type="entry name" value="GMPK"/>
    <property type="match status" value="1"/>
</dbReference>
<dbReference type="FunFam" id="3.40.50.300:FF:000855">
    <property type="entry name" value="Guanylate kinase"/>
    <property type="match status" value="1"/>
</dbReference>
<dbReference type="FunFam" id="3.30.63.10:FF:000002">
    <property type="entry name" value="Guanylate kinase 1"/>
    <property type="match status" value="1"/>
</dbReference>
<dbReference type="Gene3D" id="3.30.63.10">
    <property type="entry name" value="Guanylate Kinase phosphate binding domain"/>
    <property type="match status" value="1"/>
</dbReference>
<dbReference type="Gene3D" id="3.40.50.300">
    <property type="entry name" value="P-loop containing nucleotide triphosphate hydrolases"/>
    <property type="match status" value="1"/>
</dbReference>
<dbReference type="HAMAP" id="MF_00328">
    <property type="entry name" value="Guanylate_kinase"/>
    <property type="match status" value="1"/>
</dbReference>
<dbReference type="InterPro" id="IPR008145">
    <property type="entry name" value="GK/Ca_channel_bsu"/>
</dbReference>
<dbReference type="InterPro" id="IPR008144">
    <property type="entry name" value="Guanylate_kin-like_dom"/>
</dbReference>
<dbReference type="InterPro" id="IPR017665">
    <property type="entry name" value="Guanylate_kinase"/>
</dbReference>
<dbReference type="InterPro" id="IPR020590">
    <property type="entry name" value="Guanylate_kinase_CS"/>
</dbReference>
<dbReference type="InterPro" id="IPR027417">
    <property type="entry name" value="P-loop_NTPase"/>
</dbReference>
<dbReference type="NCBIfam" id="TIGR03263">
    <property type="entry name" value="guanyl_kin"/>
    <property type="match status" value="1"/>
</dbReference>
<dbReference type="PANTHER" id="PTHR23117:SF13">
    <property type="entry name" value="GUANYLATE KINASE"/>
    <property type="match status" value="1"/>
</dbReference>
<dbReference type="PANTHER" id="PTHR23117">
    <property type="entry name" value="GUANYLATE KINASE-RELATED"/>
    <property type="match status" value="1"/>
</dbReference>
<dbReference type="Pfam" id="PF00625">
    <property type="entry name" value="Guanylate_kin"/>
    <property type="match status" value="1"/>
</dbReference>
<dbReference type="SMART" id="SM00072">
    <property type="entry name" value="GuKc"/>
    <property type="match status" value="1"/>
</dbReference>
<dbReference type="SUPFAM" id="SSF52540">
    <property type="entry name" value="P-loop containing nucleoside triphosphate hydrolases"/>
    <property type="match status" value="1"/>
</dbReference>
<dbReference type="PROSITE" id="PS00856">
    <property type="entry name" value="GUANYLATE_KINASE_1"/>
    <property type="match status" value="1"/>
</dbReference>
<dbReference type="PROSITE" id="PS50052">
    <property type="entry name" value="GUANYLATE_KINASE_2"/>
    <property type="match status" value="1"/>
</dbReference>
<proteinExistence type="inferred from homology"/>
<evidence type="ECO:0000255" key="1">
    <source>
        <dbReference type="HAMAP-Rule" id="MF_00328"/>
    </source>
</evidence>
<accession>Q92AI1</accession>
<name>KGUA_LISIN</name>
<protein>
    <recommendedName>
        <fullName evidence="1">Guanylate kinase</fullName>
        <ecNumber evidence="1">2.7.4.8</ecNumber>
    </recommendedName>
    <alternativeName>
        <fullName evidence="1">GMP kinase</fullName>
    </alternativeName>
</protein>
<feature type="chain" id="PRO_0000170556" description="Guanylate kinase">
    <location>
        <begin position="1"/>
        <end position="205"/>
    </location>
</feature>
<feature type="domain" description="Guanylate kinase-like" evidence="1">
    <location>
        <begin position="5"/>
        <end position="184"/>
    </location>
</feature>
<feature type="binding site" evidence="1">
    <location>
        <begin position="12"/>
        <end position="19"/>
    </location>
    <ligand>
        <name>ATP</name>
        <dbReference type="ChEBI" id="CHEBI:30616"/>
    </ligand>
</feature>
<keyword id="KW-0067">ATP-binding</keyword>
<keyword id="KW-0963">Cytoplasm</keyword>
<keyword id="KW-0418">Kinase</keyword>
<keyword id="KW-0547">Nucleotide-binding</keyword>
<keyword id="KW-0808">Transferase</keyword>
<sequence>MTERGLLIVLSGPSGVGKGTVREAVFKDPETSFDYSISMTTRLPREGEQDGVDYYFRSREVFEQAIKDGKMLEYAEYVGNYYGTPLEYVEEKLAAGIDIFLEIEVQGAMQVRKAMPEGIFIFLTPPDLSELKNRIIGRGTESMEVVEERMETAKKEIEMMASYDYAVVNDVVSKAVQKIKGIVETEHLKTERVIHRYKKMLEGLQ</sequence>
<organism>
    <name type="scientific">Listeria innocua serovar 6a (strain ATCC BAA-680 / CLIP 11262)</name>
    <dbReference type="NCBI Taxonomy" id="272626"/>
    <lineage>
        <taxon>Bacteria</taxon>
        <taxon>Bacillati</taxon>
        <taxon>Bacillota</taxon>
        <taxon>Bacilli</taxon>
        <taxon>Bacillales</taxon>
        <taxon>Listeriaceae</taxon>
        <taxon>Listeria</taxon>
    </lineage>
</organism>
<reference key="1">
    <citation type="journal article" date="2001" name="Science">
        <title>Comparative genomics of Listeria species.</title>
        <authorList>
            <person name="Glaser P."/>
            <person name="Frangeul L."/>
            <person name="Buchrieser C."/>
            <person name="Rusniok C."/>
            <person name="Amend A."/>
            <person name="Baquero F."/>
            <person name="Berche P."/>
            <person name="Bloecker H."/>
            <person name="Brandt P."/>
            <person name="Chakraborty T."/>
            <person name="Charbit A."/>
            <person name="Chetouani F."/>
            <person name="Couve E."/>
            <person name="de Daruvar A."/>
            <person name="Dehoux P."/>
            <person name="Domann E."/>
            <person name="Dominguez-Bernal G."/>
            <person name="Duchaud E."/>
            <person name="Durant L."/>
            <person name="Dussurget O."/>
            <person name="Entian K.-D."/>
            <person name="Fsihi H."/>
            <person name="Garcia-del Portillo F."/>
            <person name="Garrido P."/>
            <person name="Gautier L."/>
            <person name="Goebel W."/>
            <person name="Gomez-Lopez N."/>
            <person name="Hain T."/>
            <person name="Hauf J."/>
            <person name="Jackson D."/>
            <person name="Jones L.-M."/>
            <person name="Kaerst U."/>
            <person name="Kreft J."/>
            <person name="Kuhn M."/>
            <person name="Kunst F."/>
            <person name="Kurapkat G."/>
            <person name="Madueno E."/>
            <person name="Maitournam A."/>
            <person name="Mata Vicente J."/>
            <person name="Ng E."/>
            <person name="Nedjari H."/>
            <person name="Nordsiek G."/>
            <person name="Novella S."/>
            <person name="de Pablos B."/>
            <person name="Perez-Diaz J.-C."/>
            <person name="Purcell R."/>
            <person name="Remmel B."/>
            <person name="Rose M."/>
            <person name="Schlueter T."/>
            <person name="Simoes N."/>
            <person name="Tierrez A."/>
            <person name="Vazquez-Boland J.-A."/>
            <person name="Voss H."/>
            <person name="Wehland J."/>
            <person name="Cossart P."/>
        </authorList>
    </citation>
    <scope>NUCLEOTIDE SEQUENCE [LARGE SCALE GENOMIC DNA]</scope>
    <source>
        <strain>ATCC BAA-680 / CLIP 11262</strain>
    </source>
</reference>